<comment type="function">
    <text evidence="2">Receptor for TNFSF6/FASLG. The adapter molecule FADD recruits caspase CASP8 to the activated receptor. The resulting death-inducing signaling complex (DISC) performs CASP8 proteolytic activation which initiates the subsequent cascade of caspases (aspartate-specific cysteine proteases) mediating apoptosis. FAS-mediated apoptosis may have a role in the induction of peripheral tolerance, in the antigen-stimulated suicide of mature T-cells, or both (By similarity).</text>
</comment>
<comment type="subunit">
    <text evidence="2 3">Component of the death-induced signaling complex (DISC) composed of cell surface receptor FAS/CD95, adapter protein FADD and the CASP8 protease; recruitment of CASP8 to the complex is required for processing of CASP8 into the p18 and p10 subunits (By similarity). Interacts directly (via DED domain) with NOL3 (via CARD domain); inhibits death-inducing signaling complex (DISC) assembly by inhibiting the increase in FAS-FADD binding induced by FAS activation (By similarity). Binds DAXX. Interacts with HIPK3 (By similarity). Part of a complex containing HIPK3 and FADD (By similarity). Binds RIPK1 and FAIM2. Interacts with BABAM2 and FEM1B. Interacts with CALM (By similarity). In the absence of stimulation, interacts with BIRC2, DDX3X and GSK3B. The interaction with BIRC2 and DDX3X is further enhanced upon receptor stimulation and accompanied by DDX3X and BIRC2 cleavage (By similarity).</text>
</comment>
<comment type="subcellular location">
    <subcellularLocation>
        <location evidence="4">Cell membrane</location>
        <topology evidence="4">Single-pass type I membrane protein</topology>
    </subcellularLocation>
    <subcellularLocation>
        <location evidence="2">Membrane raft</location>
    </subcellularLocation>
</comment>
<comment type="domain">
    <text>Contains a death domain involved in the binding of FADD, and maybe to other cytosolic adapter proteins.</text>
</comment>
<comment type="PTM">
    <text evidence="2">Palmitoylated. Palmitoylation by ZDHHC7 prevents the lysosomal degradation of FAS regulating its expression at the plasma membrane.</text>
</comment>
<evidence type="ECO:0000250" key="1"/>
<evidence type="ECO:0000250" key="2">
    <source>
        <dbReference type="UniProtKB" id="P25445"/>
    </source>
</evidence>
<evidence type="ECO:0000250" key="3">
    <source>
        <dbReference type="UniProtKB" id="P25446"/>
    </source>
</evidence>
<evidence type="ECO:0000250" key="4">
    <source>
        <dbReference type="UniProtKB" id="P51867"/>
    </source>
</evidence>
<evidence type="ECO:0000255" key="5"/>
<evidence type="ECO:0000255" key="6">
    <source>
        <dbReference type="PROSITE-ProRule" id="PRU00064"/>
    </source>
</evidence>
<evidence type="ECO:0000255" key="7">
    <source>
        <dbReference type="PROSITE-ProRule" id="PRU00206"/>
    </source>
</evidence>
<sequence>MLGIWTLLPLVLTYVVRLLSKCVNAQVTDISSKGFELRKIVTTIETQNLEGLHHEGQFCRNPCPPGERKARDCTVNEDEPDCVPCQEGKEYTDKGHFSSKCRRCRLCDEGHGLEVEINCTRTQNTKCRCKPNFFCNSAVCEHCDPCTKCKHGIIEECTLTSNTKCKEEDSRSDLPWLCLLLLLIPPIVYVVIKKACRKHRKENQGPHESTTLNPETAINLSDVDLSKYITTIAGAMTLSQVKDFVRKNGVSEAKIDEIKNDNVQDTAEQKVQLLRNWYQLHGKKDACDTLIKGLKTADLCTLAEKIHAVILKDITSDTENSNFGNEVQNLV</sequence>
<name>TNR6_MACNE</name>
<accession>Q9BDN0</accession>
<dbReference type="EMBL" id="AF344850">
    <property type="protein sequence ID" value="AAK37610.1"/>
    <property type="molecule type" value="mRNA"/>
</dbReference>
<dbReference type="RefSeq" id="NP_001292816.1">
    <property type="nucleotide sequence ID" value="NM_001305887.1"/>
</dbReference>
<dbReference type="SMR" id="Q9BDN0"/>
<dbReference type="STRING" id="9545.ENSMNEP00000007201"/>
<dbReference type="GlyCosmos" id="Q9BDN0">
    <property type="glycosylation" value="1 site, No reported glycans"/>
</dbReference>
<dbReference type="GeneID" id="105480710"/>
<dbReference type="KEGG" id="mni:105480710"/>
<dbReference type="CTD" id="57559"/>
<dbReference type="Proteomes" id="UP000233120">
    <property type="component" value="Unassembled WGS sequence"/>
</dbReference>
<dbReference type="GO" id="GO:0031265">
    <property type="term" value="C:CD95 death-inducing signaling complex"/>
    <property type="evidence" value="ECO:0007669"/>
    <property type="project" value="TreeGrafter"/>
</dbReference>
<dbReference type="GO" id="GO:0009897">
    <property type="term" value="C:external side of plasma membrane"/>
    <property type="evidence" value="ECO:0007669"/>
    <property type="project" value="TreeGrafter"/>
</dbReference>
<dbReference type="GO" id="GO:0045121">
    <property type="term" value="C:membrane raft"/>
    <property type="evidence" value="ECO:0007669"/>
    <property type="project" value="UniProtKB-SubCell"/>
</dbReference>
<dbReference type="GO" id="GO:0005516">
    <property type="term" value="F:calmodulin binding"/>
    <property type="evidence" value="ECO:0000250"/>
    <property type="project" value="UniProtKB"/>
</dbReference>
<dbReference type="GO" id="GO:0005031">
    <property type="term" value="F:tumor necrosis factor receptor activity"/>
    <property type="evidence" value="ECO:0007669"/>
    <property type="project" value="TreeGrafter"/>
</dbReference>
<dbReference type="GO" id="GO:0006924">
    <property type="term" value="P:activation-induced cell death of T cells"/>
    <property type="evidence" value="ECO:0007669"/>
    <property type="project" value="TreeGrafter"/>
</dbReference>
<dbReference type="GO" id="GO:0097192">
    <property type="term" value="P:extrinsic apoptotic signaling pathway in absence of ligand"/>
    <property type="evidence" value="ECO:0007669"/>
    <property type="project" value="TreeGrafter"/>
</dbReference>
<dbReference type="GO" id="GO:0006955">
    <property type="term" value="P:immune response"/>
    <property type="evidence" value="ECO:0007669"/>
    <property type="project" value="InterPro"/>
</dbReference>
<dbReference type="GO" id="GO:0097049">
    <property type="term" value="P:motor neuron apoptotic process"/>
    <property type="evidence" value="ECO:0007669"/>
    <property type="project" value="TreeGrafter"/>
</dbReference>
<dbReference type="GO" id="GO:0097527">
    <property type="term" value="P:necroptotic signaling pathway"/>
    <property type="evidence" value="ECO:0007669"/>
    <property type="project" value="TreeGrafter"/>
</dbReference>
<dbReference type="GO" id="GO:0043066">
    <property type="term" value="P:negative regulation of apoptotic process"/>
    <property type="evidence" value="ECO:0007669"/>
    <property type="project" value="TreeGrafter"/>
</dbReference>
<dbReference type="GO" id="GO:0032872">
    <property type="term" value="P:regulation of stress-activated MAPK cascade"/>
    <property type="evidence" value="ECO:0007669"/>
    <property type="project" value="TreeGrafter"/>
</dbReference>
<dbReference type="CDD" id="cd08316">
    <property type="entry name" value="Death_FAS_TNFRSF6"/>
    <property type="match status" value="1"/>
</dbReference>
<dbReference type="CDD" id="cd10579">
    <property type="entry name" value="TNFRSF6"/>
    <property type="match status" value="1"/>
</dbReference>
<dbReference type="FunFam" id="1.10.533.10:FF:000057">
    <property type="entry name" value="Tumor necrosis factor receptor superfamily member 6"/>
    <property type="match status" value="1"/>
</dbReference>
<dbReference type="FunFam" id="2.10.50.10:FF:000021">
    <property type="entry name" value="Tumor necrosis factor receptor superfamily member 6"/>
    <property type="match status" value="1"/>
</dbReference>
<dbReference type="Gene3D" id="1.10.533.10">
    <property type="entry name" value="Death Domain, Fas"/>
    <property type="match status" value="1"/>
</dbReference>
<dbReference type="Gene3D" id="2.10.50.10">
    <property type="entry name" value="Tumor Necrosis Factor Receptor, subunit A, domain 2"/>
    <property type="match status" value="2"/>
</dbReference>
<dbReference type="InterPro" id="IPR011029">
    <property type="entry name" value="DEATH-like_dom_sf"/>
</dbReference>
<dbReference type="InterPro" id="IPR000488">
    <property type="entry name" value="Death_dom"/>
</dbReference>
<dbReference type="InterPro" id="IPR008063">
    <property type="entry name" value="Fas_rcpt"/>
</dbReference>
<dbReference type="InterPro" id="IPR001368">
    <property type="entry name" value="TNFR/NGFR_Cys_rich_reg"/>
</dbReference>
<dbReference type="InterPro" id="IPR033998">
    <property type="entry name" value="TNFRSF6_death"/>
</dbReference>
<dbReference type="InterPro" id="IPR033999">
    <property type="entry name" value="TNFRSF6_N"/>
</dbReference>
<dbReference type="PANTHER" id="PTHR46874">
    <property type="entry name" value="TUMOR NECROSIS FACTOR RECEPTOR SUPERFAMILY MEMBER 6"/>
    <property type="match status" value="1"/>
</dbReference>
<dbReference type="PANTHER" id="PTHR46874:SF1">
    <property type="entry name" value="TUMOR NECROSIS FACTOR RECEPTOR SUPERFAMILY MEMBER 6"/>
    <property type="match status" value="1"/>
</dbReference>
<dbReference type="Pfam" id="PF00531">
    <property type="entry name" value="Death"/>
    <property type="match status" value="1"/>
</dbReference>
<dbReference type="Pfam" id="PF00020">
    <property type="entry name" value="TNFR_c6"/>
    <property type="match status" value="2"/>
</dbReference>
<dbReference type="PRINTS" id="PR01680">
    <property type="entry name" value="TNFACTORR6"/>
</dbReference>
<dbReference type="SMART" id="SM00005">
    <property type="entry name" value="DEATH"/>
    <property type="match status" value="1"/>
</dbReference>
<dbReference type="SMART" id="SM00208">
    <property type="entry name" value="TNFR"/>
    <property type="match status" value="2"/>
</dbReference>
<dbReference type="SUPFAM" id="SSF47986">
    <property type="entry name" value="DEATH domain"/>
    <property type="match status" value="1"/>
</dbReference>
<dbReference type="SUPFAM" id="SSF57586">
    <property type="entry name" value="TNF receptor-like"/>
    <property type="match status" value="2"/>
</dbReference>
<dbReference type="PROSITE" id="PS50017">
    <property type="entry name" value="DEATH_DOMAIN"/>
    <property type="match status" value="1"/>
</dbReference>
<dbReference type="PROSITE" id="PS00652">
    <property type="entry name" value="TNFR_NGFR_1"/>
    <property type="match status" value="2"/>
</dbReference>
<dbReference type="PROSITE" id="PS50050">
    <property type="entry name" value="TNFR_NGFR_2"/>
    <property type="match status" value="2"/>
</dbReference>
<keyword id="KW-0053">Apoptosis</keyword>
<keyword id="KW-0112">Calmodulin-binding</keyword>
<keyword id="KW-1003">Cell membrane</keyword>
<keyword id="KW-1015">Disulfide bond</keyword>
<keyword id="KW-0325">Glycoprotein</keyword>
<keyword id="KW-0449">Lipoprotein</keyword>
<keyword id="KW-0472">Membrane</keyword>
<keyword id="KW-0564">Palmitate</keyword>
<keyword id="KW-0597">Phosphoprotein</keyword>
<keyword id="KW-0675">Receptor</keyword>
<keyword id="KW-1185">Reference proteome</keyword>
<keyword id="KW-0677">Repeat</keyword>
<keyword id="KW-0732">Signal</keyword>
<keyword id="KW-0812">Transmembrane</keyword>
<keyword id="KW-1133">Transmembrane helix</keyword>
<gene>
    <name type="primary">FAS</name>
    <name type="synonym">APT1</name>
    <name type="synonym">TNFRSF6</name>
</gene>
<feature type="signal peptide" evidence="5">
    <location>
        <begin position="1"/>
        <end position="25"/>
    </location>
</feature>
<feature type="chain" id="PRO_0000034566" description="Tumor necrosis factor receptor superfamily member 6">
    <location>
        <begin position="26"/>
        <end position="331"/>
    </location>
</feature>
<feature type="topological domain" description="Extracellular" evidence="5">
    <location>
        <begin position="26"/>
        <end position="171"/>
    </location>
</feature>
<feature type="transmembrane region" description="Helical" evidence="5">
    <location>
        <begin position="172"/>
        <end position="192"/>
    </location>
</feature>
<feature type="topological domain" description="Cytoplasmic" evidence="5">
    <location>
        <begin position="193"/>
        <end position="331"/>
    </location>
</feature>
<feature type="repeat" description="TNFR-Cys 1">
    <location>
        <begin position="47"/>
        <end position="83"/>
    </location>
</feature>
<feature type="repeat" description="TNFR-Cys 2">
    <location>
        <begin position="84"/>
        <end position="127"/>
    </location>
</feature>
<feature type="repeat" description="TNFR-Cys 3">
    <location>
        <begin position="128"/>
        <end position="166"/>
    </location>
</feature>
<feature type="domain" description="Death" evidence="6">
    <location>
        <begin position="226"/>
        <end position="310"/>
    </location>
</feature>
<feature type="region of interest" description="Interaction with HIPK3" evidence="1">
    <location>
        <begin position="209"/>
        <end position="313"/>
    </location>
</feature>
<feature type="region of interest" description="Interaction with CALM" evidence="2">
    <location>
        <begin position="226"/>
        <end position="250"/>
    </location>
</feature>
<feature type="modified residue" description="Phosphothreonine" evidence="3">
    <location>
        <position position="211"/>
    </location>
</feature>
<feature type="modified residue" description="Phosphoserine" evidence="2">
    <location>
        <position position="221"/>
    </location>
</feature>
<feature type="modified residue" description="Phosphothreonine" evidence="3">
    <location>
        <position position="318"/>
    </location>
</feature>
<feature type="lipid moiety-binding region" description="S-palmitoyl cysteine" evidence="2">
    <location>
        <position position="196"/>
    </location>
</feature>
<feature type="glycosylation site" description="N-linked (GlcNAc...) asparagine" evidence="5">
    <location>
        <position position="118"/>
    </location>
</feature>
<feature type="disulfide bond" evidence="7">
    <location>
        <begin position="59"/>
        <end position="73"/>
    </location>
</feature>
<feature type="disulfide bond" evidence="7">
    <location>
        <begin position="63"/>
        <end position="82"/>
    </location>
</feature>
<feature type="disulfide bond" evidence="7">
    <location>
        <begin position="85"/>
        <end position="101"/>
    </location>
</feature>
<feature type="disulfide bond" evidence="7">
    <location>
        <begin position="104"/>
        <end position="119"/>
    </location>
</feature>
<feature type="disulfide bond" evidence="7">
    <location>
        <begin position="107"/>
        <end position="127"/>
    </location>
</feature>
<feature type="disulfide bond" evidence="7">
    <location>
        <begin position="129"/>
        <end position="143"/>
    </location>
</feature>
<feature type="disulfide bond" evidence="7">
    <location>
        <begin position="146"/>
        <end position="157"/>
    </location>
</feature>
<feature type="disulfide bond" evidence="7">
    <location>
        <begin position="149"/>
        <end position="165"/>
    </location>
</feature>
<proteinExistence type="evidence at transcript level"/>
<reference key="1">
    <citation type="journal article" date="2001" name="Immunogenetics">
        <title>Cloning, sequencing, and homology analysis of nonhuman primate Fas/Fas-ligand and co-stimulatory molecules.</title>
        <authorList>
            <person name="Villinger F.J."/>
            <person name="Bostik P."/>
            <person name="Mayne A.E."/>
            <person name="King C.L."/>
            <person name="Genain C.P."/>
            <person name="Weiss W.R."/>
            <person name="Ansari A.A."/>
        </authorList>
    </citation>
    <scope>NUCLEOTIDE SEQUENCE [MRNA]</scope>
</reference>
<protein>
    <recommendedName>
        <fullName>Tumor necrosis factor receptor superfamily member 6</fullName>
    </recommendedName>
    <alternativeName>
        <fullName>Apo-1 antigen</fullName>
    </alternativeName>
    <alternativeName>
        <fullName>Apoptosis-mediating surface antigen FAS</fullName>
    </alternativeName>
    <alternativeName>
        <fullName>FASLG receptor</fullName>
    </alternativeName>
    <cdAntigenName>CD95</cdAntigenName>
</protein>
<organism>
    <name type="scientific">Macaca nemestrina</name>
    <name type="common">Pig-tailed macaque</name>
    <dbReference type="NCBI Taxonomy" id="9545"/>
    <lineage>
        <taxon>Eukaryota</taxon>
        <taxon>Metazoa</taxon>
        <taxon>Chordata</taxon>
        <taxon>Craniata</taxon>
        <taxon>Vertebrata</taxon>
        <taxon>Euteleostomi</taxon>
        <taxon>Mammalia</taxon>
        <taxon>Eutheria</taxon>
        <taxon>Euarchontoglires</taxon>
        <taxon>Primates</taxon>
        <taxon>Haplorrhini</taxon>
        <taxon>Catarrhini</taxon>
        <taxon>Cercopithecidae</taxon>
        <taxon>Cercopithecinae</taxon>
        <taxon>Macaca</taxon>
    </lineage>
</organism>